<name>COAX_RHOJR</name>
<accession>Q0S8D3</accession>
<sequence>MLLTVDVRNTNIVLGLFTGSGEHSKLVQDWRMRTDARMTADELALIFRGLLGAHTDQITGVSALSTVPSVLREIRVMLTRYWGHVPHVLVEPGVRTGVPLLVDNPKEVGADRIVNSLAAHHLYDAPCIVVDFGTSTCVDVVSAKGEFLGGAIAPGLEISSDALASQSAALRKVELVRPRSVVGKNTVECMQSGAVFGFAGLVDGLVRRVRKELPAFSGSDVVVIATGDRAPLIMPETETVDEHEPDLTLEGLRLVYERNQARRGARRSPLE</sequence>
<keyword id="KW-0067">ATP-binding</keyword>
<keyword id="KW-0173">Coenzyme A biosynthesis</keyword>
<keyword id="KW-0963">Cytoplasm</keyword>
<keyword id="KW-0418">Kinase</keyword>
<keyword id="KW-0479">Metal-binding</keyword>
<keyword id="KW-0547">Nucleotide-binding</keyword>
<keyword id="KW-0630">Potassium</keyword>
<keyword id="KW-0808">Transferase</keyword>
<comment type="function">
    <text evidence="1">Catalyzes the phosphorylation of pantothenate (Pan), the first step in CoA biosynthesis.</text>
</comment>
<comment type="catalytic activity">
    <reaction evidence="1">
        <text>(R)-pantothenate + ATP = (R)-4'-phosphopantothenate + ADP + H(+)</text>
        <dbReference type="Rhea" id="RHEA:16373"/>
        <dbReference type="ChEBI" id="CHEBI:10986"/>
        <dbReference type="ChEBI" id="CHEBI:15378"/>
        <dbReference type="ChEBI" id="CHEBI:29032"/>
        <dbReference type="ChEBI" id="CHEBI:30616"/>
        <dbReference type="ChEBI" id="CHEBI:456216"/>
        <dbReference type="EC" id="2.7.1.33"/>
    </reaction>
</comment>
<comment type="cofactor">
    <cofactor evidence="1">
        <name>NH4(+)</name>
        <dbReference type="ChEBI" id="CHEBI:28938"/>
    </cofactor>
    <cofactor evidence="1">
        <name>K(+)</name>
        <dbReference type="ChEBI" id="CHEBI:29103"/>
    </cofactor>
    <text evidence="1">A monovalent cation. Ammonium or potassium.</text>
</comment>
<comment type="pathway">
    <text evidence="1">Cofactor biosynthesis; coenzyme A biosynthesis; CoA from (R)-pantothenate: step 1/5.</text>
</comment>
<comment type="subunit">
    <text evidence="1">Homodimer.</text>
</comment>
<comment type="subcellular location">
    <subcellularLocation>
        <location evidence="1">Cytoplasm</location>
    </subcellularLocation>
</comment>
<comment type="similarity">
    <text evidence="1">Belongs to the type III pantothenate kinase family.</text>
</comment>
<gene>
    <name evidence="1" type="primary">coaX</name>
    <name type="ordered locus">RHA1_ro04417</name>
</gene>
<feature type="chain" id="PRO_0000267582" description="Type III pantothenate kinase">
    <location>
        <begin position="1"/>
        <end position="271"/>
    </location>
</feature>
<feature type="active site" description="Proton acceptor" evidence="1">
    <location>
        <position position="111"/>
    </location>
</feature>
<feature type="binding site" evidence="1">
    <location>
        <begin position="6"/>
        <end position="13"/>
    </location>
    <ligand>
        <name>ATP</name>
        <dbReference type="ChEBI" id="CHEBI:30616"/>
    </ligand>
</feature>
<feature type="binding site" evidence="1">
    <location>
        <begin position="109"/>
        <end position="112"/>
    </location>
    <ligand>
        <name>substrate</name>
    </ligand>
</feature>
<feature type="binding site" evidence="1">
    <location>
        <position position="131"/>
    </location>
    <ligand>
        <name>K(+)</name>
        <dbReference type="ChEBI" id="CHEBI:29103"/>
    </ligand>
</feature>
<feature type="binding site" evidence="1">
    <location>
        <position position="134"/>
    </location>
    <ligand>
        <name>ATP</name>
        <dbReference type="ChEBI" id="CHEBI:30616"/>
    </ligand>
</feature>
<feature type="binding site" evidence="1">
    <location>
        <position position="186"/>
    </location>
    <ligand>
        <name>substrate</name>
    </ligand>
</feature>
<proteinExistence type="inferred from homology"/>
<organism>
    <name type="scientific">Rhodococcus jostii (strain RHA1)</name>
    <dbReference type="NCBI Taxonomy" id="101510"/>
    <lineage>
        <taxon>Bacteria</taxon>
        <taxon>Bacillati</taxon>
        <taxon>Actinomycetota</taxon>
        <taxon>Actinomycetes</taxon>
        <taxon>Mycobacteriales</taxon>
        <taxon>Nocardiaceae</taxon>
        <taxon>Rhodococcus</taxon>
    </lineage>
</organism>
<protein>
    <recommendedName>
        <fullName evidence="1">Type III pantothenate kinase</fullName>
        <ecNumber evidence="1">2.7.1.33</ecNumber>
    </recommendedName>
    <alternativeName>
        <fullName evidence="1">PanK-III</fullName>
    </alternativeName>
    <alternativeName>
        <fullName evidence="1">Pantothenic acid kinase</fullName>
    </alternativeName>
</protein>
<dbReference type="EC" id="2.7.1.33" evidence="1"/>
<dbReference type="EMBL" id="CP000431">
    <property type="protein sequence ID" value="ABG96203.1"/>
    <property type="molecule type" value="Genomic_DNA"/>
</dbReference>
<dbReference type="RefSeq" id="WP_011596827.1">
    <property type="nucleotide sequence ID" value="NC_008268.1"/>
</dbReference>
<dbReference type="SMR" id="Q0S8D3"/>
<dbReference type="KEGG" id="rha:RHA1_ro04417"/>
<dbReference type="PATRIC" id="fig|101510.16.peg.4446"/>
<dbReference type="eggNOG" id="COG1521">
    <property type="taxonomic scope" value="Bacteria"/>
</dbReference>
<dbReference type="HOGENOM" id="CLU_066627_1_0_11"/>
<dbReference type="OrthoDB" id="9804707at2"/>
<dbReference type="UniPathway" id="UPA00241">
    <property type="reaction ID" value="UER00352"/>
</dbReference>
<dbReference type="Proteomes" id="UP000008710">
    <property type="component" value="Chromosome"/>
</dbReference>
<dbReference type="GO" id="GO:0005737">
    <property type="term" value="C:cytoplasm"/>
    <property type="evidence" value="ECO:0007669"/>
    <property type="project" value="UniProtKB-SubCell"/>
</dbReference>
<dbReference type="GO" id="GO:0005524">
    <property type="term" value="F:ATP binding"/>
    <property type="evidence" value="ECO:0007669"/>
    <property type="project" value="UniProtKB-UniRule"/>
</dbReference>
<dbReference type="GO" id="GO:0046872">
    <property type="term" value="F:metal ion binding"/>
    <property type="evidence" value="ECO:0007669"/>
    <property type="project" value="UniProtKB-KW"/>
</dbReference>
<dbReference type="GO" id="GO:0004594">
    <property type="term" value="F:pantothenate kinase activity"/>
    <property type="evidence" value="ECO:0007669"/>
    <property type="project" value="UniProtKB-UniRule"/>
</dbReference>
<dbReference type="GO" id="GO:0015937">
    <property type="term" value="P:coenzyme A biosynthetic process"/>
    <property type="evidence" value="ECO:0007669"/>
    <property type="project" value="UniProtKB-UniRule"/>
</dbReference>
<dbReference type="CDD" id="cd24015">
    <property type="entry name" value="ASKHA_NBD_PanK-III"/>
    <property type="match status" value="1"/>
</dbReference>
<dbReference type="Gene3D" id="3.30.420.40">
    <property type="match status" value="2"/>
</dbReference>
<dbReference type="HAMAP" id="MF_01274">
    <property type="entry name" value="Pantothen_kinase_3"/>
    <property type="match status" value="1"/>
</dbReference>
<dbReference type="InterPro" id="IPR043129">
    <property type="entry name" value="ATPase_NBD"/>
</dbReference>
<dbReference type="InterPro" id="IPR004619">
    <property type="entry name" value="Type_III_PanK"/>
</dbReference>
<dbReference type="NCBIfam" id="TIGR00671">
    <property type="entry name" value="baf"/>
    <property type="match status" value="1"/>
</dbReference>
<dbReference type="NCBIfam" id="NF009845">
    <property type="entry name" value="PRK13318.1-3"/>
    <property type="match status" value="1"/>
</dbReference>
<dbReference type="NCBIfam" id="NF009855">
    <property type="entry name" value="PRK13321.1"/>
    <property type="match status" value="1"/>
</dbReference>
<dbReference type="PANTHER" id="PTHR34265">
    <property type="entry name" value="TYPE III PANTOTHENATE KINASE"/>
    <property type="match status" value="1"/>
</dbReference>
<dbReference type="PANTHER" id="PTHR34265:SF1">
    <property type="entry name" value="TYPE III PANTOTHENATE KINASE"/>
    <property type="match status" value="1"/>
</dbReference>
<dbReference type="Pfam" id="PF03309">
    <property type="entry name" value="Pan_kinase"/>
    <property type="match status" value="1"/>
</dbReference>
<dbReference type="SUPFAM" id="SSF53067">
    <property type="entry name" value="Actin-like ATPase domain"/>
    <property type="match status" value="2"/>
</dbReference>
<reference key="1">
    <citation type="journal article" date="2006" name="Proc. Natl. Acad. Sci. U.S.A.">
        <title>The complete genome of Rhodococcus sp. RHA1 provides insights into a catabolic powerhouse.</title>
        <authorList>
            <person name="McLeod M.P."/>
            <person name="Warren R.L."/>
            <person name="Hsiao W.W.L."/>
            <person name="Araki N."/>
            <person name="Myhre M."/>
            <person name="Fernandes C."/>
            <person name="Miyazawa D."/>
            <person name="Wong W."/>
            <person name="Lillquist A.L."/>
            <person name="Wang D."/>
            <person name="Dosanjh M."/>
            <person name="Hara H."/>
            <person name="Petrescu A."/>
            <person name="Morin R.D."/>
            <person name="Yang G."/>
            <person name="Stott J.M."/>
            <person name="Schein J.E."/>
            <person name="Shin H."/>
            <person name="Smailus D."/>
            <person name="Siddiqui A.S."/>
            <person name="Marra M.A."/>
            <person name="Jones S.J.M."/>
            <person name="Holt R."/>
            <person name="Brinkman F.S.L."/>
            <person name="Miyauchi K."/>
            <person name="Fukuda M."/>
            <person name="Davies J.E."/>
            <person name="Mohn W.W."/>
            <person name="Eltis L.D."/>
        </authorList>
    </citation>
    <scope>NUCLEOTIDE SEQUENCE [LARGE SCALE GENOMIC DNA]</scope>
    <source>
        <strain>RHA1</strain>
    </source>
</reference>
<evidence type="ECO:0000255" key="1">
    <source>
        <dbReference type="HAMAP-Rule" id="MF_01274"/>
    </source>
</evidence>